<dbReference type="EMBL" id="AF087037">
    <property type="protein sequence ID" value="AAC34894.1"/>
    <property type="molecule type" value="mRNA"/>
</dbReference>
<dbReference type="RefSeq" id="NP_062163.1">
    <property type="nucleotide sequence ID" value="NM_019290.1"/>
</dbReference>
<dbReference type="SMR" id="O88677"/>
<dbReference type="FunCoup" id="O88677">
    <property type="interactions" value="153"/>
</dbReference>
<dbReference type="STRING" id="10116.ENSRNOP00000002121"/>
<dbReference type="iPTMnet" id="O88677"/>
<dbReference type="PhosphoSitePlus" id="O88677"/>
<dbReference type="PaxDb" id="10116-ENSRNOP00000002121"/>
<dbReference type="GeneID" id="54230"/>
<dbReference type="KEGG" id="rno:54230"/>
<dbReference type="UCSC" id="RGD:2226">
    <property type="organism name" value="rat"/>
</dbReference>
<dbReference type="AGR" id="RGD:2226"/>
<dbReference type="CTD" id="10950"/>
<dbReference type="RGD" id="2226">
    <property type="gene designation" value="Btg3"/>
</dbReference>
<dbReference type="eggNOG" id="KOG4006">
    <property type="taxonomic scope" value="Eukaryota"/>
</dbReference>
<dbReference type="InParanoid" id="O88677"/>
<dbReference type="OrthoDB" id="19928at2759"/>
<dbReference type="PhylomeDB" id="O88677"/>
<dbReference type="PRO" id="PR:O88677"/>
<dbReference type="Proteomes" id="UP000002494">
    <property type="component" value="Unplaced"/>
</dbReference>
<dbReference type="GO" id="GO:0005737">
    <property type="term" value="C:cytoplasm"/>
    <property type="evidence" value="ECO:0000266"/>
    <property type="project" value="RGD"/>
</dbReference>
<dbReference type="GO" id="GO:0005634">
    <property type="term" value="C:nucleus"/>
    <property type="evidence" value="ECO:0000318"/>
    <property type="project" value="GO_Central"/>
</dbReference>
<dbReference type="GO" id="GO:0008285">
    <property type="term" value="P:negative regulation of cell population proliferation"/>
    <property type="evidence" value="ECO:0000303"/>
    <property type="project" value="UniProtKB"/>
</dbReference>
<dbReference type="GO" id="GO:0045930">
    <property type="term" value="P:negative regulation of mitotic cell cycle"/>
    <property type="evidence" value="ECO:0000266"/>
    <property type="project" value="RGD"/>
</dbReference>
<dbReference type="GO" id="GO:0006979">
    <property type="term" value="P:response to oxidative stress"/>
    <property type="evidence" value="ECO:0000270"/>
    <property type="project" value="RGD"/>
</dbReference>
<dbReference type="FunFam" id="3.90.640.90:FF:000002">
    <property type="entry name" value="BTG anti-proliferation factor 4"/>
    <property type="match status" value="1"/>
</dbReference>
<dbReference type="Gene3D" id="3.90.640.90">
    <property type="entry name" value="Anti-proliferative protein, N-terminal domain"/>
    <property type="match status" value="1"/>
</dbReference>
<dbReference type="InterPro" id="IPR002087">
    <property type="entry name" value="Anti_prolifrtn"/>
</dbReference>
<dbReference type="InterPro" id="IPR033332">
    <property type="entry name" value="BTG"/>
</dbReference>
<dbReference type="InterPro" id="IPR036054">
    <property type="entry name" value="BTG-like_sf"/>
</dbReference>
<dbReference type="PANTHER" id="PTHR22978">
    <property type="entry name" value="B-CELL TRANSLOCATION GENE"/>
    <property type="match status" value="1"/>
</dbReference>
<dbReference type="PANTHER" id="PTHR22978:SF6">
    <property type="entry name" value="PROTEIN BTG3"/>
    <property type="match status" value="1"/>
</dbReference>
<dbReference type="Pfam" id="PF07742">
    <property type="entry name" value="BTG"/>
    <property type="match status" value="1"/>
</dbReference>
<dbReference type="PRINTS" id="PR00310">
    <property type="entry name" value="ANTIPRLFBTG1"/>
</dbReference>
<dbReference type="SMART" id="SM00099">
    <property type="entry name" value="btg1"/>
    <property type="match status" value="1"/>
</dbReference>
<dbReference type="SUPFAM" id="SSF160696">
    <property type="entry name" value="BTG domain-like"/>
    <property type="match status" value="1"/>
</dbReference>
<dbReference type="PROSITE" id="PS00960">
    <property type="entry name" value="BTG_1"/>
    <property type="match status" value="1"/>
</dbReference>
<dbReference type="PROSITE" id="PS01203">
    <property type="entry name" value="BTG_2"/>
    <property type="match status" value="1"/>
</dbReference>
<comment type="function">
    <text evidence="1">Overexpression impairs serum-induced cell cycle progression from the G0/G1 to S phase.</text>
</comment>
<comment type="tissue specificity">
    <text evidence="4">Highly expressed in the brain.</text>
</comment>
<comment type="induction">
    <text evidence="4">By 12-O-tetradecanoylphorbol-13-acetate (TPA). Induced at higher levels by TPA and cycloheximide together. Also induced by redox changes after stimulation by hydrogen peroxide or menadione.</text>
</comment>
<comment type="similarity">
    <text evidence="2">Belongs to the BTG family.</text>
</comment>
<evidence type="ECO:0000250" key="1">
    <source>
        <dbReference type="UniProtKB" id="P50615"/>
    </source>
</evidence>
<evidence type="ECO:0000255" key="2"/>
<evidence type="ECO:0000256" key="3">
    <source>
        <dbReference type="SAM" id="MobiDB-lite"/>
    </source>
</evidence>
<evidence type="ECO:0000269" key="4">
    <source>
    </source>
</evidence>
<evidence type="ECO:0000305" key="5"/>
<evidence type="ECO:0000312" key="6">
    <source>
        <dbReference type="EMBL" id="AAC34894.1"/>
    </source>
</evidence>
<evidence type="ECO:0000312" key="7">
    <source>
        <dbReference type="RGD" id="2226"/>
    </source>
</evidence>
<gene>
    <name evidence="7" type="primary">Btg3</name>
</gene>
<accession>O88677</accession>
<proteinExistence type="evidence at transcript level"/>
<reference evidence="5 6" key="1">
    <citation type="journal article" date="1999" name="Gene">
        <title>Expression of rat BTG3 gene, Rbtg3, is regulated by redox changes.</title>
        <authorList>
            <person name="Seo M.S."/>
            <person name="Lee M.S."/>
            <person name="Lim I.K."/>
        </authorList>
    </citation>
    <scope>NUCLEOTIDE SEQUENCE [MRNA]</scope>
    <scope>TISSUE SPECIFICITY</scope>
    <scope>INDUCTION</scope>
    <source>
        <strain evidence="6">Fischer</strain>
        <tissue evidence="4">Fibroblast</tissue>
    </source>
</reference>
<keyword id="KW-1185">Reference proteome</keyword>
<name>BTG3_RAT</name>
<feature type="chain" id="PRO_0000143809" description="Protein BTG3">
    <location>
        <begin position="1"/>
        <end position="252"/>
    </location>
</feature>
<feature type="region of interest" description="Disordered" evidence="3">
    <location>
        <begin position="138"/>
        <end position="162"/>
    </location>
</feature>
<organism>
    <name type="scientific">Rattus norvegicus</name>
    <name type="common">Rat</name>
    <dbReference type="NCBI Taxonomy" id="10116"/>
    <lineage>
        <taxon>Eukaryota</taxon>
        <taxon>Metazoa</taxon>
        <taxon>Chordata</taxon>
        <taxon>Craniata</taxon>
        <taxon>Vertebrata</taxon>
        <taxon>Euteleostomi</taxon>
        <taxon>Mammalia</taxon>
        <taxon>Eutheria</taxon>
        <taxon>Euarchontoglires</taxon>
        <taxon>Glires</taxon>
        <taxon>Rodentia</taxon>
        <taxon>Myomorpha</taxon>
        <taxon>Muroidea</taxon>
        <taxon>Muridae</taxon>
        <taxon>Murinae</taxon>
        <taxon>Rattus</taxon>
    </lineage>
</organism>
<sequence>MKNEIAAVVFFFTRLVRKHDKLKKEAVERFAEKLTQILQEKYKNHWYPEKPSKGQAYRCIRVNKFQRVDPDVLKACEDSCILYSDLGLPKELTLWVDPCEVCCRYGKKNNAFIVASFENEDENKDEISKKVSRALDKVTSDYHSGSSSSDEDTSKEVEVKPSAVATTPSPVYQISELIFPPLPMWHPLPRKKPGMYRGGGHQSHYPPPVPFAYPSPGRKNKAFRPIPVTWVPPPGMHCDRNHWINPHMLAPH</sequence>
<protein>
    <recommendedName>
        <fullName>Protein BTG3</fullName>
        <shortName>rBTG3</shortName>
    </recommendedName>
    <alternativeName>
        <fullName>BTG family member 3</fullName>
    </alternativeName>
</protein>